<evidence type="ECO:0000255" key="1">
    <source>
        <dbReference type="HAMAP-Rule" id="MF_01082"/>
    </source>
</evidence>
<sequence length="355" mass="38768">MSVLGELDLLGPRAHGAACGEAVLKAVAEDFQVDEVLDIPLSGEGEHLWLWVEKRGLNTEEAARRLGRAAGVQQKNVSYAGLKDRQALTRQWFSLHLPGKADPDLGAAEGADLRILRRTRHSRKLQRGAHAANGFTLRLTGLRAERALLDARLERIAADGVPNYFGLQRFGHGGGNLVDARSCAEQDLLPANRNLRSRFLSAGRSYLFNRLLAERVAEGSWNRAAVGDLLAFTDSRSFFLAGEEECRDARLAALDLHPTGPLWGEGDPPSGAGVLDRELALAGSEPALCRWLAKAGMAHERRILRLPIQGLAWHYPEPDVLQLEFVLPAGCFATVVVREILDLVPTGQTENPCAY</sequence>
<keyword id="KW-0413">Isomerase</keyword>
<keyword id="KW-0819">tRNA processing</keyword>
<organism>
    <name type="scientific">Pseudomonas aeruginosa (strain UCBPP-PA14)</name>
    <dbReference type="NCBI Taxonomy" id="208963"/>
    <lineage>
        <taxon>Bacteria</taxon>
        <taxon>Pseudomonadati</taxon>
        <taxon>Pseudomonadota</taxon>
        <taxon>Gammaproteobacteria</taxon>
        <taxon>Pseudomonadales</taxon>
        <taxon>Pseudomonadaceae</taxon>
        <taxon>Pseudomonas</taxon>
    </lineage>
</organism>
<proteinExistence type="inferred from homology"/>
<dbReference type="EC" id="5.4.99.27" evidence="1"/>
<dbReference type="EMBL" id="CP000438">
    <property type="protein sequence ID" value="ABJ12859.1"/>
    <property type="molecule type" value="Genomic_DNA"/>
</dbReference>
<dbReference type="RefSeq" id="WP_003092343.1">
    <property type="nucleotide sequence ID" value="NZ_CP034244.1"/>
</dbReference>
<dbReference type="SMR" id="Q02R98"/>
<dbReference type="KEGG" id="pau:PA14_17440"/>
<dbReference type="PseudoCAP" id="PA14_17440"/>
<dbReference type="HOGENOM" id="CLU_005281_4_0_6"/>
<dbReference type="BioCyc" id="PAER208963:G1G74-1435-MONOMER"/>
<dbReference type="Proteomes" id="UP000000653">
    <property type="component" value="Chromosome"/>
</dbReference>
<dbReference type="GO" id="GO:0005829">
    <property type="term" value="C:cytosol"/>
    <property type="evidence" value="ECO:0007669"/>
    <property type="project" value="TreeGrafter"/>
</dbReference>
<dbReference type="GO" id="GO:0003723">
    <property type="term" value="F:RNA binding"/>
    <property type="evidence" value="ECO:0007669"/>
    <property type="project" value="InterPro"/>
</dbReference>
<dbReference type="GO" id="GO:0160150">
    <property type="term" value="F:tRNA pseudouridine(13) synthase activity"/>
    <property type="evidence" value="ECO:0007669"/>
    <property type="project" value="UniProtKB-EC"/>
</dbReference>
<dbReference type="GO" id="GO:0031119">
    <property type="term" value="P:tRNA pseudouridine synthesis"/>
    <property type="evidence" value="ECO:0007669"/>
    <property type="project" value="UniProtKB-UniRule"/>
</dbReference>
<dbReference type="CDD" id="cd02575">
    <property type="entry name" value="PseudoU_synth_EcTruD"/>
    <property type="match status" value="1"/>
</dbReference>
<dbReference type="Gene3D" id="3.30.2350.20">
    <property type="entry name" value="TruD, catalytic domain"/>
    <property type="match status" value="1"/>
</dbReference>
<dbReference type="Gene3D" id="3.30.2340.10">
    <property type="entry name" value="TruD, insertion domain"/>
    <property type="match status" value="1"/>
</dbReference>
<dbReference type="HAMAP" id="MF_01082">
    <property type="entry name" value="TruD"/>
    <property type="match status" value="1"/>
</dbReference>
<dbReference type="InterPro" id="IPR020103">
    <property type="entry name" value="PsdUridine_synth_cat_dom_sf"/>
</dbReference>
<dbReference type="InterPro" id="IPR001656">
    <property type="entry name" value="PsdUridine_synth_TruD"/>
</dbReference>
<dbReference type="InterPro" id="IPR020119">
    <property type="entry name" value="PsdUridine_synth_TruD_CS"/>
</dbReference>
<dbReference type="InterPro" id="IPR011760">
    <property type="entry name" value="PsdUridine_synth_TruD_insert"/>
</dbReference>
<dbReference type="InterPro" id="IPR042214">
    <property type="entry name" value="TruD_catalytic"/>
</dbReference>
<dbReference type="InterPro" id="IPR043165">
    <property type="entry name" value="TruD_insert_sf"/>
</dbReference>
<dbReference type="InterPro" id="IPR050170">
    <property type="entry name" value="TruD_pseudoU_synthase"/>
</dbReference>
<dbReference type="NCBIfam" id="NF002153">
    <property type="entry name" value="PRK00984.1-2"/>
    <property type="match status" value="1"/>
</dbReference>
<dbReference type="PANTHER" id="PTHR47811">
    <property type="entry name" value="TRNA PSEUDOURIDINE SYNTHASE D"/>
    <property type="match status" value="1"/>
</dbReference>
<dbReference type="PANTHER" id="PTHR47811:SF1">
    <property type="entry name" value="TRNA PSEUDOURIDINE SYNTHASE D"/>
    <property type="match status" value="1"/>
</dbReference>
<dbReference type="Pfam" id="PF01142">
    <property type="entry name" value="TruD"/>
    <property type="match status" value="2"/>
</dbReference>
<dbReference type="SUPFAM" id="SSF55120">
    <property type="entry name" value="Pseudouridine synthase"/>
    <property type="match status" value="1"/>
</dbReference>
<dbReference type="PROSITE" id="PS50984">
    <property type="entry name" value="TRUD"/>
    <property type="match status" value="1"/>
</dbReference>
<dbReference type="PROSITE" id="PS01268">
    <property type="entry name" value="UPF0024"/>
    <property type="match status" value="1"/>
</dbReference>
<feature type="chain" id="PRO_1000084755" description="tRNA pseudouridine synthase D">
    <location>
        <begin position="1"/>
        <end position="355"/>
    </location>
</feature>
<feature type="domain" description="TRUD" evidence="1">
    <location>
        <begin position="160"/>
        <end position="306"/>
    </location>
</feature>
<feature type="active site" description="Nucleophile" evidence="1">
    <location>
        <position position="84"/>
    </location>
</feature>
<accession>Q02R98</accession>
<comment type="function">
    <text evidence="1">Responsible for synthesis of pseudouridine from uracil-13 in transfer RNAs.</text>
</comment>
<comment type="catalytic activity">
    <reaction evidence="1">
        <text>uridine(13) in tRNA = pseudouridine(13) in tRNA</text>
        <dbReference type="Rhea" id="RHEA:42540"/>
        <dbReference type="Rhea" id="RHEA-COMP:10105"/>
        <dbReference type="Rhea" id="RHEA-COMP:10106"/>
        <dbReference type="ChEBI" id="CHEBI:65314"/>
        <dbReference type="ChEBI" id="CHEBI:65315"/>
        <dbReference type="EC" id="5.4.99.27"/>
    </reaction>
</comment>
<comment type="similarity">
    <text evidence="1">Belongs to the pseudouridine synthase TruD family.</text>
</comment>
<protein>
    <recommendedName>
        <fullName evidence="1">tRNA pseudouridine synthase D</fullName>
        <ecNumber evidence="1">5.4.99.27</ecNumber>
    </recommendedName>
    <alternativeName>
        <fullName evidence="1">tRNA pseudouridine(13) synthase</fullName>
    </alternativeName>
    <alternativeName>
        <fullName evidence="1">tRNA pseudouridylate synthase D</fullName>
    </alternativeName>
    <alternativeName>
        <fullName evidence="1">tRNA-uridine isomerase D</fullName>
    </alternativeName>
</protein>
<gene>
    <name evidence="1" type="primary">truD</name>
    <name type="ordered locus">PA14_17440</name>
</gene>
<reference key="1">
    <citation type="journal article" date="2006" name="Genome Biol.">
        <title>Genomic analysis reveals that Pseudomonas aeruginosa virulence is combinatorial.</title>
        <authorList>
            <person name="Lee D.G."/>
            <person name="Urbach J.M."/>
            <person name="Wu G."/>
            <person name="Liberati N.T."/>
            <person name="Feinbaum R.L."/>
            <person name="Miyata S."/>
            <person name="Diggins L.T."/>
            <person name="He J."/>
            <person name="Saucier M."/>
            <person name="Deziel E."/>
            <person name="Friedman L."/>
            <person name="Li L."/>
            <person name="Grills G."/>
            <person name="Montgomery K."/>
            <person name="Kucherlapati R."/>
            <person name="Rahme L.G."/>
            <person name="Ausubel F.M."/>
        </authorList>
    </citation>
    <scope>NUCLEOTIDE SEQUENCE [LARGE SCALE GENOMIC DNA]</scope>
    <source>
        <strain>UCBPP-PA14</strain>
    </source>
</reference>
<name>TRUD_PSEAB</name>